<protein>
    <recommendedName>
        <fullName evidence="1">Hydroxyacylglutathione hydrolase</fullName>
        <ecNumber evidence="1">3.1.2.6</ecNumber>
    </recommendedName>
    <alternativeName>
        <fullName evidence="1">Glyoxalase II</fullName>
        <shortName evidence="1">Glx II</shortName>
    </alternativeName>
</protein>
<dbReference type="EC" id="3.1.2.6" evidence="1"/>
<dbReference type="EMBL" id="CP000116">
    <property type="protein sequence ID" value="AAZ97618.1"/>
    <property type="molecule type" value="Genomic_DNA"/>
</dbReference>
<dbReference type="RefSeq" id="WP_011312177.1">
    <property type="nucleotide sequence ID" value="NC_007404.1"/>
</dbReference>
<dbReference type="SMR" id="Q3SIB0"/>
<dbReference type="STRING" id="292415.Tbd_1665"/>
<dbReference type="KEGG" id="tbd:Tbd_1665"/>
<dbReference type="eggNOG" id="COG0491">
    <property type="taxonomic scope" value="Bacteria"/>
</dbReference>
<dbReference type="HOGENOM" id="CLU_030571_4_1_4"/>
<dbReference type="OrthoDB" id="9802248at2"/>
<dbReference type="UniPathway" id="UPA00619">
    <property type="reaction ID" value="UER00676"/>
</dbReference>
<dbReference type="Proteomes" id="UP000008291">
    <property type="component" value="Chromosome"/>
</dbReference>
<dbReference type="GO" id="GO:0004416">
    <property type="term" value="F:hydroxyacylglutathione hydrolase activity"/>
    <property type="evidence" value="ECO:0007669"/>
    <property type="project" value="UniProtKB-UniRule"/>
</dbReference>
<dbReference type="GO" id="GO:0046872">
    <property type="term" value="F:metal ion binding"/>
    <property type="evidence" value="ECO:0007669"/>
    <property type="project" value="UniProtKB-KW"/>
</dbReference>
<dbReference type="GO" id="GO:0019243">
    <property type="term" value="P:methylglyoxal catabolic process to D-lactate via S-lactoyl-glutathione"/>
    <property type="evidence" value="ECO:0007669"/>
    <property type="project" value="InterPro"/>
</dbReference>
<dbReference type="CDD" id="cd07723">
    <property type="entry name" value="hydroxyacylglutathione_hydrolase_MBL-fold"/>
    <property type="match status" value="1"/>
</dbReference>
<dbReference type="Gene3D" id="3.60.15.10">
    <property type="entry name" value="Ribonuclease Z/Hydroxyacylglutathione hydrolase-like"/>
    <property type="match status" value="1"/>
</dbReference>
<dbReference type="HAMAP" id="MF_01374">
    <property type="entry name" value="Glyoxalase_2"/>
    <property type="match status" value="1"/>
</dbReference>
<dbReference type="InterPro" id="IPR035680">
    <property type="entry name" value="Clx_II_MBL"/>
</dbReference>
<dbReference type="InterPro" id="IPR050110">
    <property type="entry name" value="Glyoxalase_II_hydrolase"/>
</dbReference>
<dbReference type="InterPro" id="IPR032282">
    <property type="entry name" value="HAGH_C"/>
</dbReference>
<dbReference type="InterPro" id="IPR017782">
    <property type="entry name" value="Hydroxyacylglutathione_Hdrlase"/>
</dbReference>
<dbReference type="InterPro" id="IPR001279">
    <property type="entry name" value="Metallo-B-lactamas"/>
</dbReference>
<dbReference type="InterPro" id="IPR036866">
    <property type="entry name" value="RibonucZ/Hydroxyglut_hydro"/>
</dbReference>
<dbReference type="NCBIfam" id="TIGR03413">
    <property type="entry name" value="GSH_gloB"/>
    <property type="match status" value="1"/>
</dbReference>
<dbReference type="PANTHER" id="PTHR43705">
    <property type="entry name" value="HYDROXYACYLGLUTATHIONE HYDROLASE"/>
    <property type="match status" value="1"/>
</dbReference>
<dbReference type="PANTHER" id="PTHR43705:SF1">
    <property type="entry name" value="HYDROXYACYLGLUTATHIONE HYDROLASE GLOB"/>
    <property type="match status" value="1"/>
</dbReference>
<dbReference type="Pfam" id="PF16123">
    <property type="entry name" value="HAGH_C"/>
    <property type="match status" value="1"/>
</dbReference>
<dbReference type="Pfam" id="PF00753">
    <property type="entry name" value="Lactamase_B"/>
    <property type="match status" value="1"/>
</dbReference>
<dbReference type="PIRSF" id="PIRSF005457">
    <property type="entry name" value="Glx"/>
    <property type="match status" value="1"/>
</dbReference>
<dbReference type="SMART" id="SM00849">
    <property type="entry name" value="Lactamase_B"/>
    <property type="match status" value="1"/>
</dbReference>
<dbReference type="SUPFAM" id="SSF56281">
    <property type="entry name" value="Metallo-hydrolase/oxidoreductase"/>
    <property type="match status" value="1"/>
</dbReference>
<sequence>MLTLIPLPAFEDNYIWVWHDAKYAVAVDPGDPAVLSTYLDSRGLALAAVLVTHHHRDHTGGNTWLRQRYNCAIYAPDNPRIPAVSHVVRGGDSVAVPELGLALAVLATPGHTLDHVSYVGNGHLFCGDTLFGCGCGKLFEGDAAMMSASLDALAALPPTTRVCCAHEYTLSNIDFAKTIDGANPALLERERIDRAARAQNRPTLPSTLALERTTNPFLRFHDADMRAFAVGELGSPDPGPATVFGAIRAAKDRWDG</sequence>
<comment type="function">
    <text evidence="1">Thiolesterase that catalyzes the hydrolysis of S-D-lactoyl-glutathione to form glutathione and D-lactic acid.</text>
</comment>
<comment type="catalytic activity">
    <reaction evidence="1">
        <text>an S-(2-hydroxyacyl)glutathione + H2O = a 2-hydroxy carboxylate + glutathione + H(+)</text>
        <dbReference type="Rhea" id="RHEA:21864"/>
        <dbReference type="ChEBI" id="CHEBI:15377"/>
        <dbReference type="ChEBI" id="CHEBI:15378"/>
        <dbReference type="ChEBI" id="CHEBI:57925"/>
        <dbReference type="ChEBI" id="CHEBI:58896"/>
        <dbReference type="ChEBI" id="CHEBI:71261"/>
        <dbReference type="EC" id="3.1.2.6"/>
    </reaction>
</comment>
<comment type="cofactor">
    <cofactor evidence="1">
        <name>Zn(2+)</name>
        <dbReference type="ChEBI" id="CHEBI:29105"/>
    </cofactor>
    <text evidence="1">Binds 2 Zn(2+) ions per subunit.</text>
</comment>
<comment type="pathway">
    <text evidence="1">Secondary metabolite metabolism; methylglyoxal degradation; (R)-lactate from methylglyoxal: step 2/2.</text>
</comment>
<comment type="subunit">
    <text evidence="1">Monomer.</text>
</comment>
<comment type="similarity">
    <text evidence="1">Belongs to the metallo-beta-lactamase superfamily. Glyoxalase II family.</text>
</comment>
<reference key="1">
    <citation type="journal article" date="2006" name="J. Bacteriol.">
        <title>The genome sequence of the obligately chemolithoautotrophic, facultatively anaerobic bacterium Thiobacillus denitrificans.</title>
        <authorList>
            <person name="Beller H.R."/>
            <person name="Chain P.S."/>
            <person name="Letain T.E."/>
            <person name="Chakicherla A."/>
            <person name="Larimer F.W."/>
            <person name="Richardson P.M."/>
            <person name="Coleman M.A."/>
            <person name="Wood A.P."/>
            <person name="Kelly D.P."/>
        </authorList>
    </citation>
    <scope>NUCLEOTIDE SEQUENCE [LARGE SCALE GENOMIC DNA]</scope>
    <source>
        <strain>ATCC 25259 / T1</strain>
    </source>
</reference>
<keyword id="KW-0378">Hydrolase</keyword>
<keyword id="KW-0479">Metal-binding</keyword>
<keyword id="KW-1185">Reference proteome</keyword>
<keyword id="KW-0862">Zinc</keyword>
<feature type="chain" id="PRO_1000144818" description="Hydroxyacylglutathione hydrolase">
    <location>
        <begin position="1"/>
        <end position="256"/>
    </location>
</feature>
<feature type="binding site" evidence="1">
    <location>
        <position position="53"/>
    </location>
    <ligand>
        <name>Zn(2+)</name>
        <dbReference type="ChEBI" id="CHEBI:29105"/>
        <label>1</label>
    </ligand>
</feature>
<feature type="binding site" evidence="1">
    <location>
        <position position="55"/>
    </location>
    <ligand>
        <name>Zn(2+)</name>
        <dbReference type="ChEBI" id="CHEBI:29105"/>
        <label>1</label>
    </ligand>
</feature>
<feature type="binding site" evidence="1">
    <location>
        <position position="57"/>
    </location>
    <ligand>
        <name>Zn(2+)</name>
        <dbReference type="ChEBI" id="CHEBI:29105"/>
        <label>2</label>
    </ligand>
</feature>
<feature type="binding site" evidence="1">
    <location>
        <position position="58"/>
    </location>
    <ligand>
        <name>Zn(2+)</name>
        <dbReference type="ChEBI" id="CHEBI:29105"/>
        <label>2</label>
    </ligand>
</feature>
<feature type="binding site" evidence="1">
    <location>
        <position position="111"/>
    </location>
    <ligand>
        <name>Zn(2+)</name>
        <dbReference type="ChEBI" id="CHEBI:29105"/>
        <label>1</label>
    </ligand>
</feature>
<feature type="binding site" evidence="1">
    <location>
        <position position="128"/>
    </location>
    <ligand>
        <name>Zn(2+)</name>
        <dbReference type="ChEBI" id="CHEBI:29105"/>
        <label>1</label>
    </ligand>
</feature>
<feature type="binding site" evidence="1">
    <location>
        <position position="128"/>
    </location>
    <ligand>
        <name>Zn(2+)</name>
        <dbReference type="ChEBI" id="CHEBI:29105"/>
        <label>2</label>
    </ligand>
</feature>
<feature type="binding site" evidence="1">
    <location>
        <position position="166"/>
    </location>
    <ligand>
        <name>Zn(2+)</name>
        <dbReference type="ChEBI" id="CHEBI:29105"/>
        <label>2</label>
    </ligand>
</feature>
<proteinExistence type="inferred from homology"/>
<gene>
    <name evidence="1" type="primary">gloB</name>
    <name type="ordered locus">Tbd_1665</name>
</gene>
<evidence type="ECO:0000255" key="1">
    <source>
        <dbReference type="HAMAP-Rule" id="MF_01374"/>
    </source>
</evidence>
<accession>Q3SIB0</accession>
<organism>
    <name type="scientific">Thiobacillus denitrificans (strain ATCC 25259 / T1)</name>
    <dbReference type="NCBI Taxonomy" id="292415"/>
    <lineage>
        <taxon>Bacteria</taxon>
        <taxon>Pseudomonadati</taxon>
        <taxon>Pseudomonadota</taxon>
        <taxon>Betaproteobacteria</taxon>
        <taxon>Nitrosomonadales</taxon>
        <taxon>Thiobacillaceae</taxon>
        <taxon>Thiobacillus</taxon>
    </lineage>
</organism>
<name>GLO2_THIDA</name>